<dbReference type="EMBL" id="CP000920">
    <property type="protein sequence ID" value="ACO21653.1"/>
    <property type="molecule type" value="Genomic_DNA"/>
</dbReference>
<dbReference type="RefSeq" id="WP_000351907.1">
    <property type="nucleotide sequence ID" value="NC_012467.1"/>
</dbReference>
<dbReference type="PDB" id="4I98">
    <property type="method" value="X-ray"/>
    <property type="resolution" value="2.80 A"/>
    <property type="chains" value="A=1-160"/>
</dbReference>
<dbReference type="PDBsum" id="4I98"/>
<dbReference type="SMR" id="C1CMI6"/>
<dbReference type="KEGG" id="spp:SPP_1876"/>
<dbReference type="HOGENOM" id="CLU_038686_3_3_9"/>
<dbReference type="EvolutionaryTrace" id="C1CMI6"/>
<dbReference type="GO" id="GO:0005737">
    <property type="term" value="C:cytoplasm"/>
    <property type="evidence" value="ECO:0007669"/>
    <property type="project" value="UniProtKB-SubCell"/>
</dbReference>
<dbReference type="GO" id="GO:0051301">
    <property type="term" value="P:cell division"/>
    <property type="evidence" value="ECO:0007669"/>
    <property type="project" value="UniProtKB-KW"/>
</dbReference>
<dbReference type="GO" id="GO:0007059">
    <property type="term" value="P:chromosome segregation"/>
    <property type="evidence" value="ECO:0007669"/>
    <property type="project" value="UniProtKB-UniRule"/>
</dbReference>
<dbReference type="GO" id="GO:0006260">
    <property type="term" value="P:DNA replication"/>
    <property type="evidence" value="ECO:0007669"/>
    <property type="project" value="UniProtKB-UniRule"/>
</dbReference>
<dbReference type="Gene3D" id="6.10.250.2410">
    <property type="match status" value="1"/>
</dbReference>
<dbReference type="Gene3D" id="1.10.10.580">
    <property type="entry name" value="Structural maintenance of chromosome 1. Chain E"/>
    <property type="match status" value="1"/>
</dbReference>
<dbReference type="HAMAP" id="MF_01805">
    <property type="entry name" value="ScpA"/>
    <property type="match status" value="1"/>
</dbReference>
<dbReference type="InterPro" id="IPR003768">
    <property type="entry name" value="ScpA"/>
</dbReference>
<dbReference type="InterPro" id="IPR023093">
    <property type="entry name" value="ScpA-like_C"/>
</dbReference>
<dbReference type="NCBIfam" id="NF000993">
    <property type="entry name" value="PRK00104.1-2"/>
    <property type="match status" value="1"/>
</dbReference>
<dbReference type="PANTHER" id="PTHR33969">
    <property type="entry name" value="SEGREGATION AND CONDENSATION PROTEIN A"/>
    <property type="match status" value="1"/>
</dbReference>
<dbReference type="PANTHER" id="PTHR33969:SF2">
    <property type="entry name" value="SEGREGATION AND CONDENSATION PROTEIN A"/>
    <property type="match status" value="1"/>
</dbReference>
<dbReference type="Pfam" id="PF02616">
    <property type="entry name" value="SMC_ScpA"/>
    <property type="match status" value="1"/>
</dbReference>
<keyword id="KW-0002">3D-structure</keyword>
<keyword id="KW-0131">Cell cycle</keyword>
<keyword id="KW-0132">Cell division</keyword>
<keyword id="KW-0159">Chromosome partition</keyword>
<keyword id="KW-0963">Cytoplasm</keyword>
<protein>
    <recommendedName>
        <fullName evidence="1">Segregation and condensation protein A</fullName>
    </recommendedName>
</protein>
<gene>
    <name evidence="1" type="primary">scpA</name>
    <name type="ordered locus">SPP_1876</name>
</gene>
<comment type="function">
    <text evidence="1">Participates in chromosomal partition during cell division. May act via the formation of a condensin-like complex containing Smc and ScpB that pull DNA away from mid-cell into both cell halves.</text>
</comment>
<comment type="subunit">
    <text evidence="1">Component of a cohesin-like complex composed of ScpA, ScpB and the Smc homodimer, in which ScpA and ScpB bind to the head domain of Smc. The presence of the three proteins is required for the association of the complex with DNA.</text>
</comment>
<comment type="subcellular location">
    <subcellularLocation>
        <location evidence="1">Cytoplasm</location>
    </subcellularLocation>
    <text evidence="1">Associated with two foci at the outer edges of the nucleoid region in young cells, and at four foci within both cell halves in older cells.</text>
</comment>
<comment type="similarity">
    <text evidence="1">Belongs to the ScpA family.</text>
</comment>
<feature type="chain" id="PRO_1000187576" description="Segregation and condensation protein A">
    <location>
        <begin position="1"/>
        <end position="242"/>
    </location>
</feature>
<feature type="helix" evidence="2">
    <location>
        <begin position="11"/>
        <end position="21"/>
    </location>
</feature>
<feature type="strand" evidence="2">
    <location>
        <begin position="24"/>
        <end position="26"/>
    </location>
</feature>
<feature type="helix" evidence="2">
    <location>
        <begin position="31"/>
        <end position="44"/>
    </location>
</feature>
<feature type="turn" evidence="2">
    <location>
        <begin position="45"/>
        <end position="48"/>
    </location>
</feature>
<feature type="helix" evidence="2">
    <location>
        <begin position="55"/>
        <end position="71"/>
    </location>
</feature>
<feature type="helix" evidence="2">
    <location>
        <begin position="81"/>
        <end position="114"/>
    </location>
</feature>
<feature type="helix" evidence="2">
    <location>
        <begin position="137"/>
        <end position="152"/>
    </location>
</feature>
<proteinExistence type="evidence at protein level"/>
<organism>
    <name type="scientific">Streptococcus pneumoniae (strain P1031)</name>
    <dbReference type="NCBI Taxonomy" id="488223"/>
    <lineage>
        <taxon>Bacteria</taxon>
        <taxon>Bacillati</taxon>
        <taxon>Bacillota</taxon>
        <taxon>Bacilli</taxon>
        <taxon>Lactobacillales</taxon>
        <taxon>Streptococcaceae</taxon>
        <taxon>Streptococcus</taxon>
    </lineage>
</organism>
<sequence>MDIKLKDFEGPLDLLLHLVSKYQMDIYDVPITEVIEQYLAYVSTLQAMRLEVTGEYMVMASQLMLIKSRKLLPKVAEVTDLGDDLEQDLLSQIEEYRKFKLLGEHLEAKHQERAQYYSKAPTELIYEDAELVHDKTTIDLFLAFSNILAKKKEEFAQNHTTILRDEYKIEDMMIIVKESLIGRDQLRLQDLFKEAQNVQEVITLFLATLELIKTQELILVQEESFGDIYLMEKKEESQVPQS</sequence>
<reference key="1">
    <citation type="journal article" date="2010" name="Genome Biol.">
        <title>Structure and dynamics of the pan-genome of Streptococcus pneumoniae and closely related species.</title>
        <authorList>
            <person name="Donati C."/>
            <person name="Hiller N.L."/>
            <person name="Tettelin H."/>
            <person name="Muzzi A."/>
            <person name="Croucher N.J."/>
            <person name="Angiuoli S.V."/>
            <person name="Oggioni M."/>
            <person name="Dunning Hotopp J.C."/>
            <person name="Hu F.Z."/>
            <person name="Riley D.R."/>
            <person name="Covacci A."/>
            <person name="Mitchell T.J."/>
            <person name="Bentley S.D."/>
            <person name="Kilian M."/>
            <person name="Ehrlich G.D."/>
            <person name="Rappuoli R."/>
            <person name="Moxon E.R."/>
            <person name="Masignani V."/>
        </authorList>
    </citation>
    <scope>NUCLEOTIDE SEQUENCE [LARGE SCALE GENOMIC DNA]</scope>
    <source>
        <strain>P1031</strain>
    </source>
</reference>
<accession>C1CMI6</accession>
<name>SCPA_STRZP</name>
<evidence type="ECO:0000255" key="1">
    <source>
        <dbReference type="HAMAP-Rule" id="MF_01805"/>
    </source>
</evidence>
<evidence type="ECO:0007829" key="2">
    <source>
        <dbReference type="PDB" id="4I98"/>
    </source>
</evidence>